<accession>Q54TW3</accession>
<gene>
    <name type="primary">rpl29</name>
    <name type="ORF">DDB_G0281469</name>
</gene>
<name>RL29_DICDI</name>
<proteinExistence type="inferred from homology"/>
<protein>
    <recommendedName>
        <fullName evidence="2">Large ribosomal subunit protein eL29</fullName>
    </recommendedName>
    <alternativeName>
        <fullName>60S ribosomal protein L29</fullName>
    </alternativeName>
</protein>
<keyword id="KW-1185">Reference proteome</keyword>
<keyword id="KW-0687">Ribonucleoprotein</keyword>
<keyword id="KW-0689">Ribosomal protein</keyword>
<organism>
    <name type="scientific">Dictyostelium discoideum</name>
    <name type="common">Social amoeba</name>
    <dbReference type="NCBI Taxonomy" id="44689"/>
    <lineage>
        <taxon>Eukaryota</taxon>
        <taxon>Amoebozoa</taxon>
        <taxon>Evosea</taxon>
        <taxon>Eumycetozoa</taxon>
        <taxon>Dictyostelia</taxon>
        <taxon>Dictyosteliales</taxon>
        <taxon>Dictyosteliaceae</taxon>
        <taxon>Dictyostelium</taxon>
    </lineage>
</organism>
<feature type="chain" id="PRO_0000325947" description="Large ribosomal subunit protein eL29">
    <location>
        <begin position="1"/>
        <end position="93"/>
    </location>
</feature>
<feature type="region of interest" description="Disordered" evidence="1">
    <location>
        <begin position="1"/>
        <end position="33"/>
    </location>
</feature>
<feature type="compositionally biased region" description="Basic residues" evidence="1">
    <location>
        <begin position="1"/>
        <end position="31"/>
    </location>
</feature>
<sequence>MAKSKNHSTHHKNRKDHRNGIKKAVVHKKTSSKGVELGFARNQRYARIGTEIKRYVRGDMQEVKAHKNPRQPLKTIVAAAKAKLAAKKAAAKK</sequence>
<reference key="1">
    <citation type="journal article" date="2005" name="Nature">
        <title>The genome of the social amoeba Dictyostelium discoideum.</title>
        <authorList>
            <person name="Eichinger L."/>
            <person name="Pachebat J.A."/>
            <person name="Gloeckner G."/>
            <person name="Rajandream M.A."/>
            <person name="Sucgang R."/>
            <person name="Berriman M."/>
            <person name="Song J."/>
            <person name="Olsen R."/>
            <person name="Szafranski K."/>
            <person name="Xu Q."/>
            <person name="Tunggal B."/>
            <person name="Kummerfeld S."/>
            <person name="Madera M."/>
            <person name="Konfortov B.A."/>
            <person name="Rivero F."/>
            <person name="Bankier A.T."/>
            <person name="Lehmann R."/>
            <person name="Hamlin N."/>
            <person name="Davies R."/>
            <person name="Gaudet P."/>
            <person name="Fey P."/>
            <person name="Pilcher K."/>
            <person name="Chen G."/>
            <person name="Saunders D."/>
            <person name="Sodergren E.J."/>
            <person name="Davis P."/>
            <person name="Kerhornou A."/>
            <person name="Nie X."/>
            <person name="Hall N."/>
            <person name="Anjard C."/>
            <person name="Hemphill L."/>
            <person name="Bason N."/>
            <person name="Farbrother P."/>
            <person name="Desany B."/>
            <person name="Just E."/>
            <person name="Morio T."/>
            <person name="Rost R."/>
            <person name="Churcher C.M."/>
            <person name="Cooper J."/>
            <person name="Haydock S."/>
            <person name="van Driessche N."/>
            <person name="Cronin A."/>
            <person name="Goodhead I."/>
            <person name="Muzny D.M."/>
            <person name="Mourier T."/>
            <person name="Pain A."/>
            <person name="Lu M."/>
            <person name="Harper D."/>
            <person name="Lindsay R."/>
            <person name="Hauser H."/>
            <person name="James K.D."/>
            <person name="Quiles M."/>
            <person name="Madan Babu M."/>
            <person name="Saito T."/>
            <person name="Buchrieser C."/>
            <person name="Wardroper A."/>
            <person name="Felder M."/>
            <person name="Thangavelu M."/>
            <person name="Johnson D."/>
            <person name="Knights A."/>
            <person name="Loulseged H."/>
            <person name="Mungall K.L."/>
            <person name="Oliver K."/>
            <person name="Price C."/>
            <person name="Quail M.A."/>
            <person name="Urushihara H."/>
            <person name="Hernandez J."/>
            <person name="Rabbinowitsch E."/>
            <person name="Steffen D."/>
            <person name="Sanders M."/>
            <person name="Ma J."/>
            <person name="Kohara Y."/>
            <person name="Sharp S."/>
            <person name="Simmonds M.N."/>
            <person name="Spiegler S."/>
            <person name="Tivey A."/>
            <person name="Sugano S."/>
            <person name="White B."/>
            <person name="Walker D."/>
            <person name="Woodward J.R."/>
            <person name="Winckler T."/>
            <person name="Tanaka Y."/>
            <person name="Shaulsky G."/>
            <person name="Schleicher M."/>
            <person name="Weinstock G.M."/>
            <person name="Rosenthal A."/>
            <person name="Cox E.C."/>
            <person name="Chisholm R.L."/>
            <person name="Gibbs R.A."/>
            <person name="Loomis W.F."/>
            <person name="Platzer M."/>
            <person name="Kay R.R."/>
            <person name="Williams J.G."/>
            <person name="Dear P.H."/>
            <person name="Noegel A.A."/>
            <person name="Barrell B.G."/>
            <person name="Kuspa A."/>
        </authorList>
    </citation>
    <scope>NUCLEOTIDE SEQUENCE [LARGE SCALE GENOMIC DNA]</scope>
    <source>
        <strain>AX4</strain>
    </source>
</reference>
<dbReference type="EMBL" id="AAFI02000041">
    <property type="protein sequence ID" value="EAL66716.1"/>
    <property type="molecule type" value="Genomic_DNA"/>
</dbReference>
<dbReference type="RefSeq" id="XP_640698.1">
    <property type="nucleotide sequence ID" value="XM_635606.1"/>
</dbReference>
<dbReference type="SMR" id="Q54TW3"/>
<dbReference type="FunCoup" id="Q54TW3">
    <property type="interactions" value="320"/>
</dbReference>
<dbReference type="STRING" id="44689.Q54TW3"/>
<dbReference type="PaxDb" id="44689-DDB0230154"/>
<dbReference type="EnsemblProtists" id="EAL66716">
    <property type="protein sequence ID" value="EAL66716"/>
    <property type="gene ID" value="DDB_G0281469"/>
</dbReference>
<dbReference type="GeneID" id="8623084"/>
<dbReference type="KEGG" id="ddi:DDB_G0281469"/>
<dbReference type="dictyBase" id="DDB_G0281469">
    <property type="gene designation" value="rpl29"/>
</dbReference>
<dbReference type="VEuPathDB" id="AmoebaDB:DDB_G0281469"/>
<dbReference type="eggNOG" id="ENOG502RHXK">
    <property type="taxonomic scope" value="Eukaryota"/>
</dbReference>
<dbReference type="HOGENOM" id="CLU_169255_1_1_1"/>
<dbReference type="InParanoid" id="Q54TW3"/>
<dbReference type="OMA" id="NHSTHHK"/>
<dbReference type="PhylomeDB" id="Q54TW3"/>
<dbReference type="Reactome" id="R-DDI-156827">
    <property type="pathway name" value="L13a-mediated translational silencing of Ceruloplasmin expression"/>
</dbReference>
<dbReference type="Reactome" id="R-DDI-1799339">
    <property type="pathway name" value="SRP-dependent cotranslational protein targeting to membrane"/>
</dbReference>
<dbReference type="Reactome" id="R-DDI-72689">
    <property type="pathway name" value="Formation of a pool of free 40S subunits"/>
</dbReference>
<dbReference type="Reactome" id="R-DDI-72706">
    <property type="pathway name" value="GTP hydrolysis and joining of the 60S ribosomal subunit"/>
</dbReference>
<dbReference type="Reactome" id="R-DDI-975956">
    <property type="pathway name" value="Nonsense Mediated Decay (NMD) independent of the Exon Junction Complex (EJC)"/>
</dbReference>
<dbReference type="Reactome" id="R-DDI-975957">
    <property type="pathway name" value="Nonsense Mediated Decay (NMD) enhanced by the Exon Junction Complex (EJC)"/>
</dbReference>
<dbReference type="PRO" id="PR:Q54TW3"/>
<dbReference type="Proteomes" id="UP000002195">
    <property type="component" value="Chromosome 3"/>
</dbReference>
<dbReference type="GO" id="GO:0022625">
    <property type="term" value="C:cytosolic large ribosomal subunit"/>
    <property type="evidence" value="ECO:0000318"/>
    <property type="project" value="GO_Central"/>
</dbReference>
<dbReference type="GO" id="GO:0003735">
    <property type="term" value="F:structural constituent of ribosome"/>
    <property type="evidence" value="ECO:0000318"/>
    <property type="project" value="GO_Central"/>
</dbReference>
<dbReference type="GO" id="GO:0002181">
    <property type="term" value="P:cytoplasmic translation"/>
    <property type="evidence" value="ECO:0000318"/>
    <property type="project" value="GO_Central"/>
</dbReference>
<dbReference type="Gene3D" id="6.10.140.1730">
    <property type="match status" value="1"/>
</dbReference>
<dbReference type="InterPro" id="IPR002673">
    <property type="entry name" value="Ribosomal_eL29"/>
</dbReference>
<dbReference type="PANTHER" id="PTHR12884">
    <property type="entry name" value="60S RIBOSOMAL PROTEIN L29"/>
    <property type="match status" value="1"/>
</dbReference>
<dbReference type="PANTHER" id="PTHR12884:SF0">
    <property type="entry name" value="60S RIBOSOMAL PROTEIN L29"/>
    <property type="match status" value="1"/>
</dbReference>
<dbReference type="Pfam" id="PF01779">
    <property type="entry name" value="Ribosomal_L29e"/>
    <property type="match status" value="1"/>
</dbReference>
<comment type="similarity">
    <text evidence="2">Belongs to the eukaryotic ribosomal protein eL29 family.</text>
</comment>
<evidence type="ECO:0000256" key="1">
    <source>
        <dbReference type="SAM" id="MobiDB-lite"/>
    </source>
</evidence>
<evidence type="ECO:0000305" key="2"/>